<keyword id="KW-1185">Reference proteome</keyword>
<keyword id="KW-0687">Ribonucleoprotein</keyword>
<keyword id="KW-0689">Ribosomal protein</keyword>
<sequence length="60" mass="6561">MTKEAKVKVQLVRSPIGTKESHRATVRGLGLRGVNSVSELQDTPAVRGMINKISYLVKVI</sequence>
<name>RL30_POLSJ</name>
<reference key="1">
    <citation type="journal article" date="2008" name="Appl. Environ. Microbiol.">
        <title>The genome of Polaromonas sp. strain JS666: insights into the evolution of a hydrocarbon- and xenobiotic-degrading bacterium, and features of relevance to biotechnology.</title>
        <authorList>
            <person name="Mattes T.E."/>
            <person name="Alexander A.K."/>
            <person name="Richardson P.M."/>
            <person name="Munk A.C."/>
            <person name="Han C.S."/>
            <person name="Stothard P."/>
            <person name="Coleman N.V."/>
        </authorList>
    </citation>
    <scope>NUCLEOTIDE SEQUENCE [LARGE SCALE GENOMIC DNA]</scope>
    <source>
        <strain>JS666 / ATCC BAA-500</strain>
    </source>
</reference>
<gene>
    <name evidence="1" type="primary">rpmD</name>
    <name type="ordered locus">Bpro_0493</name>
</gene>
<protein>
    <recommendedName>
        <fullName evidence="1">Large ribosomal subunit protein uL30</fullName>
    </recommendedName>
    <alternativeName>
        <fullName evidence="2">50S ribosomal protein L30</fullName>
    </alternativeName>
</protein>
<proteinExistence type="inferred from homology"/>
<comment type="subunit">
    <text evidence="1">Part of the 50S ribosomal subunit.</text>
</comment>
<comment type="similarity">
    <text evidence="1">Belongs to the universal ribosomal protein uL30 family.</text>
</comment>
<evidence type="ECO:0000255" key="1">
    <source>
        <dbReference type="HAMAP-Rule" id="MF_01371"/>
    </source>
</evidence>
<evidence type="ECO:0000305" key="2"/>
<feature type="chain" id="PRO_0000273822" description="Large ribosomal subunit protein uL30">
    <location>
        <begin position="1"/>
        <end position="60"/>
    </location>
</feature>
<accession>Q12G85</accession>
<organism>
    <name type="scientific">Polaromonas sp. (strain JS666 / ATCC BAA-500)</name>
    <dbReference type="NCBI Taxonomy" id="296591"/>
    <lineage>
        <taxon>Bacteria</taxon>
        <taxon>Pseudomonadati</taxon>
        <taxon>Pseudomonadota</taxon>
        <taxon>Betaproteobacteria</taxon>
        <taxon>Burkholderiales</taxon>
        <taxon>Comamonadaceae</taxon>
        <taxon>Polaromonas</taxon>
    </lineage>
</organism>
<dbReference type="EMBL" id="CP000316">
    <property type="protein sequence ID" value="ABE42457.1"/>
    <property type="molecule type" value="Genomic_DNA"/>
</dbReference>
<dbReference type="RefSeq" id="WP_011481462.1">
    <property type="nucleotide sequence ID" value="NC_007948.1"/>
</dbReference>
<dbReference type="SMR" id="Q12G85"/>
<dbReference type="STRING" id="296591.Bpro_0493"/>
<dbReference type="KEGG" id="pol:Bpro_0493"/>
<dbReference type="eggNOG" id="COG1841">
    <property type="taxonomic scope" value="Bacteria"/>
</dbReference>
<dbReference type="HOGENOM" id="CLU_131047_1_4_4"/>
<dbReference type="OrthoDB" id="9812790at2"/>
<dbReference type="Proteomes" id="UP000001983">
    <property type="component" value="Chromosome"/>
</dbReference>
<dbReference type="GO" id="GO:0022625">
    <property type="term" value="C:cytosolic large ribosomal subunit"/>
    <property type="evidence" value="ECO:0007669"/>
    <property type="project" value="TreeGrafter"/>
</dbReference>
<dbReference type="GO" id="GO:0003735">
    <property type="term" value="F:structural constituent of ribosome"/>
    <property type="evidence" value="ECO:0007669"/>
    <property type="project" value="InterPro"/>
</dbReference>
<dbReference type="GO" id="GO:0006412">
    <property type="term" value="P:translation"/>
    <property type="evidence" value="ECO:0007669"/>
    <property type="project" value="UniProtKB-UniRule"/>
</dbReference>
<dbReference type="CDD" id="cd01658">
    <property type="entry name" value="Ribosomal_L30"/>
    <property type="match status" value="1"/>
</dbReference>
<dbReference type="FunFam" id="3.30.1390.20:FF:000001">
    <property type="entry name" value="50S ribosomal protein L30"/>
    <property type="match status" value="1"/>
</dbReference>
<dbReference type="Gene3D" id="3.30.1390.20">
    <property type="entry name" value="Ribosomal protein L30, ferredoxin-like fold domain"/>
    <property type="match status" value="1"/>
</dbReference>
<dbReference type="HAMAP" id="MF_01371_B">
    <property type="entry name" value="Ribosomal_uL30_B"/>
    <property type="match status" value="1"/>
</dbReference>
<dbReference type="InterPro" id="IPR036919">
    <property type="entry name" value="Ribo_uL30_ferredoxin-like_sf"/>
</dbReference>
<dbReference type="InterPro" id="IPR005996">
    <property type="entry name" value="Ribosomal_uL30_bac-type"/>
</dbReference>
<dbReference type="InterPro" id="IPR016082">
    <property type="entry name" value="Ribosomal_uL30_ferredoxin-like"/>
</dbReference>
<dbReference type="NCBIfam" id="TIGR01308">
    <property type="entry name" value="rpmD_bact"/>
    <property type="match status" value="1"/>
</dbReference>
<dbReference type="PANTHER" id="PTHR15892:SF2">
    <property type="entry name" value="LARGE RIBOSOMAL SUBUNIT PROTEIN UL30M"/>
    <property type="match status" value="1"/>
</dbReference>
<dbReference type="PANTHER" id="PTHR15892">
    <property type="entry name" value="MITOCHONDRIAL RIBOSOMAL PROTEIN L30"/>
    <property type="match status" value="1"/>
</dbReference>
<dbReference type="Pfam" id="PF00327">
    <property type="entry name" value="Ribosomal_L30"/>
    <property type="match status" value="1"/>
</dbReference>
<dbReference type="PIRSF" id="PIRSF002211">
    <property type="entry name" value="Ribosomal_L30_bac-type"/>
    <property type="match status" value="1"/>
</dbReference>
<dbReference type="SUPFAM" id="SSF55129">
    <property type="entry name" value="Ribosomal protein L30p/L7e"/>
    <property type="match status" value="1"/>
</dbReference>